<reference key="1">
    <citation type="journal article" date="1990" name="J. Virol.">
        <title>Nonessential region of bacteriophage P4: DNA sequence, transcription, gene products, and functions.</title>
        <authorList>
            <person name="Ghisotti D."/>
            <person name="Finkel S."/>
            <person name="Halling C."/>
            <person name="Deho G."/>
            <person name="Sironi G."/>
            <person name="Calendar R."/>
        </authorList>
    </citation>
    <scope>NUCLEOTIDE SEQUENCE [GENOMIC DNA]</scope>
</reference>
<reference key="2">
    <citation type="journal article" date="1990" name="Nucleic Acids Res.">
        <title>DNA sequence of satellite bacteriophage P4.</title>
        <authorList>
            <person name="Halling C."/>
            <person name="Calendar R."/>
            <person name="Christie G.E."/>
            <person name="Dale E.C."/>
            <person name="Deho G."/>
            <person name="Finkel S."/>
            <person name="Flensburg J."/>
            <person name="Ghisotti D."/>
            <person name="Kahn M.L."/>
            <person name="Lane K.B."/>
            <person name="Lin C.-S."/>
            <person name="Lindqvist B.H."/>
            <person name="Pierson L.S."/>
            <person name="Six E.W."/>
            <person name="Sunshine M.G."/>
            <person name="Ziermann R."/>
        </authorList>
    </citation>
    <scope>NUCLEOTIDE SEQUENCE [LARGE SCALE GENOMIC DNA]</scope>
</reference>
<gene>
    <name type="primary">gop</name>
</gene>
<accession>P13058</accession>
<sequence>MLNHVYGLIGVVGTIITIATSFIRNQDISQWLLVCSGWLAALLIGWFTHRTIKAISNNHTNVIKSNMEVINSHNESNQNLMAENKELIKELARTSEQKEKMESIAAYLATQNPQINAMPRTASRPENIDSEAN</sequence>
<dbReference type="EMBL" id="M27748">
    <property type="protein sequence ID" value="AAA32427.1"/>
    <property type="molecule type" value="Genomic_DNA"/>
</dbReference>
<dbReference type="EMBL" id="X51522">
    <property type="protein sequence ID" value="CAA35894.1"/>
    <property type="molecule type" value="Genomic_DNA"/>
</dbReference>
<dbReference type="RefSeq" id="NP_042032.1">
    <property type="nucleotide sequence ID" value="NC_001609.1"/>
</dbReference>
<dbReference type="SMR" id="P13058"/>
<dbReference type="KEGG" id="vg:1261097"/>
<dbReference type="Proteomes" id="UP000009093">
    <property type="component" value="Genome"/>
</dbReference>
<organism>
    <name type="scientific">Enterobacteria phage P4</name>
    <name type="common">Bacteriophage P4</name>
    <dbReference type="NCBI Taxonomy" id="10680"/>
    <lineage>
        <taxon>Viruses</taxon>
        <taxon>Duplodnaviria</taxon>
        <taxon>Heunggongvirae</taxon>
        <taxon>Uroviricota</taxon>
        <taxon>Caudoviricetes</taxon>
    </lineage>
</organism>
<proteinExistence type="predicted"/>
<feature type="chain" id="PRO_0000165225" description="Protein gop">
    <location>
        <begin position="1"/>
        <end position="133"/>
    </location>
</feature>
<comment type="function">
    <text>This protein kills E.coli when the beta protein is absent.</text>
</comment>
<keyword id="KW-1185">Reference proteome</keyword>
<protein>
    <recommendedName>
        <fullName>Protein gop</fullName>
    </recommendedName>
</protein>
<name>GOP_BPP4</name>
<organismHost>
    <name type="scientific">Escherichia coli</name>
    <dbReference type="NCBI Taxonomy" id="562"/>
</organismHost>